<evidence type="ECO:0000250" key="1">
    <source>
        <dbReference type="UniProtKB" id="Q62052"/>
    </source>
</evidence>
<evidence type="ECO:0000255" key="2"/>
<evidence type="ECO:0000256" key="3">
    <source>
        <dbReference type="SAM" id="MobiDB-lite"/>
    </source>
</evidence>
<evidence type="ECO:0000269" key="4">
    <source>
    </source>
</evidence>
<evidence type="ECO:0000269" key="5">
    <source>
    </source>
</evidence>
<evidence type="ECO:0000269" key="6">
    <source>
    </source>
</evidence>
<evidence type="ECO:0000269" key="7">
    <source>
    </source>
</evidence>
<evidence type="ECO:0000269" key="8">
    <source>
    </source>
</evidence>
<evidence type="ECO:0000269" key="9">
    <source>
    </source>
</evidence>
<evidence type="ECO:0000269" key="10">
    <source>
    </source>
</evidence>
<evidence type="ECO:0000269" key="11">
    <source>
    </source>
</evidence>
<evidence type="ECO:0000269" key="12">
    <source>
    </source>
</evidence>
<evidence type="ECO:0000269" key="13">
    <source>
    </source>
</evidence>
<evidence type="ECO:0000269" key="14">
    <source>
    </source>
</evidence>
<evidence type="ECO:0000269" key="15">
    <source>
    </source>
</evidence>
<evidence type="ECO:0000269" key="16">
    <source>
    </source>
</evidence>
<evidence type="ECO:0000269" key="17">
    <source>
    </source>
</evidence>
<evidence type="ECO:0000269" key="18">
    <source>
    </source>
</evidence>
<evidence type="ECO:0000269" key="19">
    <source>
    </source>
</evidence>
<evidence type="ECO:0000269" key="20">
    <source>
    </source>
</evidence>
<evidence type="ECO:0000269" key="21">
    <source>
    </source>
</evidence>
<evidence type="ECO:0000269" key="22">
    <source>
    </source>
</evidence>
<evidence type="ECO:0000269" key="23">
    <source>
    </source>
</evidence>
<evidence type="ECO:0000269" key="24">
    <source>
    </source>
</evidence>
<evidence type="ECO:0000269" key="25">
    <source>
    </source>
</evidence>
<evidence type="ECO:0000269" key="26">
    <source>
    </source>
</evidence>
<evidence type="ECO:0000269" key="27">
    <source>
    </source>
</evidence>
<evidence type="ECO:0000269" key="28">
    <source>
    </source>
</evidence>
<evidence type="ECO:0000269" key="29">
    <source>
    </source>
</evidence>
<evidence type="ECO:0000269" key="30">
    <source>
    </source>
</evidence>
<evidence type="ECO:0000303" key="31">
    <source>
    </source>
</evidence>
<evidence type="ECO:0000303" key="32">
    <source>
    </source>
</evidence>
<evidence type="ECO:0000305" key="33"/>
<evidence type="ECO:0000305" key="34">
    <source>
    </source>
</evidence>
<evidence type="ECO:0000312" key="35">
    <source>
        <dbReference type="HGNC" id="HGNC:8101"/>
    </source>
</evidence>
<organism>
    <name type="scientific">Homo sapiens</name>
    <name type="common">Human</name>
    <dbReference type="NCBI Taxonomy" id="9606"/>
    <lineage>
        <taxon>Eukaryota</taxon>
        <taxon>Metazoa</taxon>
        <taxon>Chordata</taxon>
        <taxon>Craniata</taxon>
        <taxon>Vertebrata</taxon>
        <taxon>Euteleostomi</taxon>
        <taxon>Mammalia</taxon>
        <taxon>Eutheria</taxon>
        <taxon>Euarchontoglires</taxon>
        <taxon>Primates</taxon>
        <taxon>Haplorrhini</taxon>
        <taxon>Catarrhini</taxon>
        <taxon>Hominidae</taxon>
        <taxon>Homo</taxon>
    </lineage>
</organism>
<gene>
    <name evidence="35" type="primary">OCA2</name>
    <name type="synonym">D15S12</name>
    <name type="synonym">P</name>
</gene>
<sequence length="838" mass="92850">MHLEGRDGRRYPGAPAVELLQTSVPSGLAELVAGKRRLPRGAGGADPSHSCPRGAAGQSSWAPAGQEFASFLTKGRSHSSLPQMSSSRSKDSCFTENTPLLRNSLQEKGSRCIPVYHPEFITAEESWEDSSADWERRYLLSREVSGLSASASSEKGDLLDSPHIRLRLSKLRRCVQWLKVMGLFAFVVLCSILFSLYPDQGKLWQLLALSPLENYSVNLSSHVDSTLLQVDLAGALVASGPSRPGREEHIVVELTQADALGSRWRRPQQVTHNWTVYLNPRRSEHSVMSRTFEVLTRETVSISIRASLQQTQAVPLLMAHQYLRGSVETQVTIATAILAGVYALIIFEIVHRTLAAMLGSLAALAALAVIGDRPSLTHVVEWIDFETLALLFGMMILVAIFSETGFFDYCAVKAYRLSRGRVWAMIIMLCLIAAVLSAFLDNVTTMLLFTPVTIRLCEVLNLDPRQVLIAEVIFTNIGGAATAIGDPPNVIIVSNQELRKMGLDFAGFTAHMFIGICLVLLVCFPLLRLLYWNRKLYNKEPSEIVELKHEIHVWRLTAQRISPASREETAVRRLLLGKVLALEHLLARRLHTFHRQISQEDKNWETNIQELQKKHRISDGILLAKCLTVLGFVIFMFFLNSFVPGIHLDLGWIAILGAIWLLILADIHDFEIILHRVEWATLLFFAALFVLMEALAHLHLIEYVGEQTALLIKMVPEEQRLIAAIVLVVWVSALASSLIDNIPFTATMIPVLLNLSHDPEVGLPAPPLMYALAFGACLGGNGTLIGASANVVCAGIAEQHGYGFSFMEFFRLGFPMMVVSCTVGMCYLLVAHVVVGWN</sequence>
<dbReference type="EMBL" id="M99564">
    <property type="protein sequence ID" value="AAA36477.1"/>
    <property type="molecule type" value="mRNA"/>
</dbReference>
<dbReference type="EMBL" id="U19170">
    <property type="protein sequence ID" value="AAC13783.1"/>
    <property type="molecule type" value="Genomic_DNA"/>
</dbReference>
<dbReference type="EMBL" id="U19153">
    <property type="protein sequence ID" value="AAC13783.1"/>
    <property type="status" value="JOINED"/>
    <property type="molecule type" value="Genomic_DNA"/>
</dbReference>
<dbReference type="EMBL" id="U19154">
    <property type="protein sequence ID" value="AAC13783.1"/>
    <property type="status" value="JOINED"/>
    <property type="molecule type" value="Genomic_DNA"/>
</dbReference>
<dbReference type="EMBL" id="U19156">
    <property type="protein sequence ID" value="AAC13783.1"/>
    <property type="status" value="JOINED"/>
    <property type="molecule type" value="Genomic_DNA"/>
</dbReference>
<dbReference type="EMBL" id="U19158">
    <property type="protein sequence ID" value="AAC13783.1"/>
    <property type="status" value="JOINED"/>
    <property type="molecule type" value="Genomic_DNA"/>
</dbReference>
<dbReference type="EMBL" id="U19160">
    <property type="protein sequence ID" value="AAC13783.1"/>
    <property type="status" value="JOINED"/>
    <property type="molecule type" value="Genomic_DNA"/>
</dbReference>
<dbReference type="EMBL" id="U19162">
    <property type="protein sequence ID" value="AAC13783.1"/>
    <property type="status" value="JOINED"/>
    <property type="molecule type" value="Genomic_DNA"/>
</dbReference>
<dbReference type="EMBL" id="U19164">
    <property type="protein sequence ID" value="AAC13783.1"/>
    <property type="status" value="JOINED"/>
    <property type="molecule type" value="Genomic_DNA"/>
</dbReference>
<dbReference type="EMBL" id="U19166">
    <property type="protein sequence ID" value="AAC13783.1"/>
    <property type="status" value="JOINED"/>
    <property type="molecule type" value="Genomic_DNA"/>
</dbReference>
<dbReference type="EMBL" id="U19169">
    <property type="protein sequence ID" value="AAC13783.1"/>
    <property type="status" value="JOINED"/>
    <property type="molecule type" value="Genomic_DNA"/>
</dbReference>
<dbReference type="EMBL" id="U19168">
    <property type="protein sequence ID" value="AAC13783.1"/>
    <property type="status" value="JOINED"/>
    <property type="molecule type" value="Genomic_DNA"/>
</dbReference>
<dbReference type="EMBL" id="U19167">
    <property type="protein sequence ID" value="AAC13783.1"/>
    <property type="status" value="JOINED"/>
    <property type="molecule type" value="Genomic_DNA"/>
</dbReference>
<dbReference type="EMBL" id="U19165">
    <property type="protein sequence ID" value="AAC13783.1"/>
    <property type="status" value="JOINED"/>
    <property type="molecule type" value="Genomic_DNA"/>
</dbReference>
<dbReference type="EMBL" id="U19163">
    <property type="protein sequence ID" value="AAC13783.1"/>
    <property type="status" value="JOINED"/>
    <property type="molecule type" value="Genomic_DNA"/>
</dbReference>
<dbReference type="EMBL" id="U19161">
    <property type="protein sequence ID" value="AAC13783.1"/>
    <property type="status" value="JOINED"/>
    <property type="molecule type" value="Genomic_DNA"/>
</dbReference>
<dbReference type="EMBL" id="U19159">
    <property type="protein sequence ID" value="AAC13783.1"/>
    <property type="status" value="JOINED"/>
    <property type="molecule type" value="Genomic_DNA"/>
</dbReference>
<dbReference type="EMBL" id="U19157">
    <property type="protein sequence ID" value="AAC13783.1"/>
    <property type="status" value="JOINED"/>
    <property type="molecule type" value="Genomic_DNA"/>
</dbReference>
<dbReference type="EMBL" id="U19155">
    <property type="protein sequence ID" value="AAC13783.1"/>
    <property type="status" value="JOINED"/>
    <property type="molecule type" value="Genomic_DNA"/>
</dbReference>
<dbReference type="EMBL" id="U19176">
    <property type="protein sequence ID" value="AAC13784.1"/>
    <property type="molecule type" value="Genomic_DNA"/>
</dbReference>
<dbReference type="EMBL" id="U19153">
    <property type="protein sequence ID" value="AAC13784.1"/>
    <property type="status" value="JOINED"/>
    <property type="molecule type" value="Genomic_DNA"/>
</dbReference>
<dbReference type="EMBL" id="U19154">
    <property type="protein sequence ID" value="AAC13784.1"/>
    <property type="status" value="JOINED"/>
    <property type="molecule type" value="Genomic_DNA"/>
</dbReference>
<dbReference type="EMBL" id="U19155">
    <property type="protein sequence ID" value="AAC13784.1"/>
    <property type="status" value="JOINED"/>
    <property type="molecule type" value="Genomic_DNA"/>
</dbReference>
<dbReference type="EMBL" id="U19157">
    <property type="protein sequence ID" value="AAC13784.1"/>
    <property type="status" value="JOINED"/>
    <property type="molecule type" value="Genomic_DNA"/>
</dbReference>
<dbReference type="EMBL" id="U19158">
    <property type="protein sequence ID" value="AAC13784.1"/>
    <property type="status" value="JOINED"/>
    <property type="molecule type" value="Genomic_DNA"/>
</dbReference>
<dbReference type="EMBL" id="U19159">
    <property type="protein sequence ID" value="AAC13784.1"/>
    <property type="status" value="JOINED"/>
    <property type="molecule type" value="Genomic_DNA"/>
</dbReference>
<dbReference type="EMBL" id="U19160">
    <property type="protein sequence ID" value="AAC13784.1"/>
    <property type="status" value="JOINED"/>
    <property type="molecule type" value="Genomic_DNA"/>
</dbReference>
<dbReference type="EMBL" id="U19161">
    <property type="protein sequence ID" value="AAC13784.1"/>
    <property type="status" value="JOINED"/>
    <property type="molecule type" value="Genomic_DNA"/>
</dbReference>
<dbReference type="EMBL" id="U19162">
    <property type="protein sequence ID" value="AAC13784.1"/>
    <property type="status" value="JOINED"/>
    <property type="molecule type" value="Genomic_DNA"/>
</dbReference>
<dbReference type="EMBL" id="U19163">
    <property type="protein sequence ID" value="AAC13784.1"/>
    <property type="status" value="JOINED"/>
    <property type="molecule type" value="Genomic_DNA"/>
</dbReference>
<dbReference type="EMBL" id="U19164">
    <property type="protein sequence ID" value="AAC13784.1"/>
    <property type="status" value="JOINED"/>
    <property type="molecule type" value="Genomic_DNA"/>
</dbReference>
<dbReference type="EMBL" id="U19165">
    <property type="protein sequence ID" value="AAC13784.1"/>
    <property type="status" value="JOINED"/>
    <property type="molecule type" value="Genomic_DNA"/>
</dbReference>
<dbReference type="EMBL" id="U19166">
    <property type="protein sequence ID" value="AAC13784.1"/>
    <property type="status" value="JOINED"/>
    <property type="molecule type" value="Genomic_DNA"/>
</dbReference>
<dbReference type="EMBL" id="U19167">
    <property type="protein sequence ID" value="AAC13784.1"/>
    <property type="status" value="JOINED"/>
    <property type="molecule type" value="Genomic_DNA"/>
</dbReference>
<dbReference type="EMBL" id="U19168">
    <property type="protein sequence ID" value="AAC13784.1"/>
    <property type="status" value="JOINED"/>
    <property type="molecule type" value="Genomic_DNA"/>
</dbReference>
<dbReference type="EMBL" id="U19169">
    <property type="protein sequence ID" value="AAC13784.1"/>
    <property type="status" value="JOINED"/>
    <property type="molecule type" value="Genomic_DNA"/>
</dbReference>
<dbReference type="EMBL" id="U19171">
    <property type="protein sequence ID" value="AAC13784.1"/>
    <property type="status" value="JOINED"/>
    <property type="molecule type" value="Genomic_DNA"/>
</dbReference>
<dbReference type="EMBL" id="U19172">
    <property type="protein sequence ID" value="AAC13784.1"/>
    <property type="status" value="JOINED"/>
    <property type="molecule type" value="Genomic_DNA"/>
</dbReference>
<dbReference type="EMBL" id="U19173">
    <property type="protein sequence ID" value="AAC13784.1"/>
    <property type="status" value="JOINED"/>
    <property type="molecule type" value="Genomic_DNA"/>
</dbReference>
<dbReference type="EMBL" id="U19174">
    <property type="protein sequence ID" value="AAC13784.1"/>
    <property type="status" value="JOINED"/>
    <property type="molecule type" value="Genomic_DNA"/>
</dbReference>
<dbReference type="EMBL" id="U19175">
    <property type="protein sequence ID" value="AAC13784.1"/>
    <property type="status" value="JOINED"/>
    <property type="molecule type" value="Genomic_DNA"/>
</dbReference>
<dbReference type="EMBL" id="BC012097">
    <property type="protein sequence ID" value="AAH12097.1"/>
    <property type="molecule type" value="mRNA"/>
</dbReference>
<dbReference type="EMBL" id="M97901">
    <property type="protein sequence ID" value="AAA36430.1"/>
    <property type="molecule type" value="mRNA"/>
</dbReference>
<dbReference type="CCDS" id="CCDS10020.1">
    <molecule id="Q04671-1"/>
</dbReference>
<dbReference type="CCDS" id="CCDS73701.1">
    <molecule id="Q04671-2"/>
</dbReference>
<dbReference type="PIR" id="A57173">
    <property type="entry name" value="A57173"/>
</dbReference>
<dbReference type="PIR" id="S28911">
    <property type="entry name" value="S28911"/>
</dbReference>
<dbReference type="RefSeq" id="NP_000266.2">
    <molecule id="Q04671-1"/>
    <property type="nucleotide sequence ID" value="NM_000275.3"/>
</dbReference>
<dbReference type="RefSeq" id="NP_001287913.1">
    <molecule id="Q04671-2"/>
    <property type="nucleotide sequence ID" value="NM_001300984.2"/>
</dbReference>
<dbReference type="SMR" id="Q04671"/>
<dbReference type="BioGRID" id="111002">
    <property type="interactions" value="5"/>
</dbReference>
<dbReference type="FunCoup" id="Q04671">
    <property type="interactions" value="125"/>
</dbReference>
<dbReference type="IntAct" id="Q04671">
    <property type="interactions" value="4"/>
</dbReference>
<dbReference type="STRING" id="9606.ENSP00000346659"/>
<dbReference type="TCDB" id="2.A.45.2.1">
    <property type="family name" value="the arsenite-antimonite (arsb) efflux family"/>
</dbReference>
<dbReference type="GlyCosmos" id="Q04671">
    <property type="glycosylation" value="5 sites, No reported glycans"/>
</dbReference>
<dbReference type="GlyGen" id="Q04671">
    <property type="glycosylation" value="7 sites, 1 O-linked glycan (1 site)"/>
</dbReference>
<dbReference type="iPTMnet" id="Q04671"/>
<dbReference type="PhosphoSitePlus" id="Q04671"/>
<dbReference type="BioMuta" id="OCA2"/>
<dbReference type="DMDM" id="90110050"/>
<dbReference type="jPOST" id="Q04671"/>
<dbReference type="MassIVE" id="Q04671"/>
<dbReference type="PaxDb" id="9606-ENSP00000346659"/>
<dbReference type="PeptideAtlas" id="Q04671"/>
<dbReference type="Antibodypedia" id="22329">
    <property type="antibodies" value="187 antibodies from 25 providers"/>
</dbReference>
<dbReference type="DNASU" id="4948"/>
<dbReference type="Ensembl" id="ENST00000353809.9">
    <molecule id="Q04671-2"/>
    <property type="protein sequence ID" value="ENSP00000261276.8"/>
    <property type="gene ID" value="ENSG00000104044.16"/>
</dbReference>
<dbReference type="Ensembl" id="ENST00000354638.8">
    <molecule id="Q04671-1"/>
    <property type="protein sequence ID" value="ENSP00000346659.3"/>
    <property type="gene ID" value="ENSG00000104044.16"/>
</dbReference>
<dbReference type="GeneID" id="4948"/>
<dbReference type="KEGG" id="hsa:4948"/>
<dbReference type="MANE-Select" id="ENST00000354638.8">
    <property type="protein sequence ID" value="ENSP00000346659.3"/>
    <property type="RefSeq nucleotide sequence ID" value="NM_000275.3"/>
    <property type="RefSeq protein sequence ID" value="NP_000266.2"/>
</dbReference>
<dbReference type="UCSC" id="uc001zbh.6">
    <molecule id="Q04671-1"/>
    <property type="organism name" value="human"/>
</dbReference>
<dbReference type="AGR" id="HGNC:8101"/>
<dbReference type="CTD" id="4948"/>
<dbReference type="DisGeNET" id="4948"/>
<dbReference type="GeneCards" id="OCA2"/>
<dbReference type="GeneReviews" id="OCA2"/>
<dbReference type="HGNC" id="HGNC:8101">
    <property type="gene designation" value="OCA2"/>
</dbReference>
<dbReference type="HPA" id="ENSG00000104044">
    <property type="expression patterns" value="Tissue enriched (choroid)"/>
</dbReference>
<dbReference type="MalaCards" id="OCA2"/>
<dbReference type="MIM" id="203200">
    <property type="type" value="phenotype"/>
</dbReference>
<dbReference type="MIM" id="227220">
    <property type="type" value="phenotype"/>
</dbReference>
<dbReference type="MIM" id="611409">
    <property type="type" value="gene"/>
</dbReference>
<dbReference type="neXtProt" id="NX_Q04671"/>
<dbReference type="OpenTargets" id="ENSG00000104044"/>
<dbReference type="Orphanet" id="98794">
    <property type="disease" value="Angelman syndrome due to maternal 15q11q13 deletion"/>
</dbReference>
<dbReference type="Orphanet" id="79432">
    <property type="disease" value="Oculocutaneous albinism type 2"/>
</dbReference>
<dbReference type="Orphanet" id="98754">
    <property type="disease" value="Prader-Willi syndrome due to maternal uniparental disomy of chromosome 15"/>
</dbReference>
<dbReference type="Orphanet" id="177901">
    <property type="disease" value="Prader-Willi syndrome due to paternal deletion of 15q11q13 type 1"/>
</dbReference>
<dbReference type="Orphanet" id="177904">
    <property type="disease" value="Prader-Willi syndrome due to paternal deletion of 15q11q13 type 2"/>
</dbReference>
<dbReference type="PharmGKB" id="PA31890"/>
<dbReference type="VEuPathDB" id="HostDB:ENSG00000104044"/>
<dbReference type="eggNOG" id="KOG2639">
    <property type="taxonomic scope" value="Eukaryota"/>
</dbReference>
<dbReference type="GeneTree" id="ENSGT01030000234550"/>
<dbReference type="HOGENOM" id="CLU_011920_2_1_1"/>
<dbReference type="InParanoid" id="Q04671"/>
<dbReference type="OMA" id="HHRIRDK"/>
<dbReference type="OrthoDB" id="442352at2759"/>
<dbReference type="PAN-GO" id="Q04671">
    <property type="GO annotations" value="3 GO annotations based on evolutionary models"/>
</dbReference>
<dbReference type="PhylomeDB" id="Q04671"/>
<dbReference type="TreeFam" id="TF323556"/>
<dbReference type="PathwayCommons" id="Q04671"/>
<dbReference type="Reactome" id="R-HSA-5662702">
    <property type="pathway name" value="Melanin biosynthesis"/>
</dbReference>
<dbReference type="SignaLink" id="Q04671"/>
<dbReference type="SIGNOR" id="Q04671"/>
<dbReference type="BioGRID-ORCS" id="4948">
    <property type="hits" value="8 hits in 1142 CRISPR screens"/>
</dbReference>
<dbReference type="ChiTaRS" id="OCA2">
    <property type="organism name" value="human"/>
</dbReference>
<dbReference type="GeneWiki" id="OCA2"/>
<dbReference type="GenomeRNAi" id="4948"/>
<dbReference type="Pharos" id="Q04671">
    <property type="development level" value="Tbio"/>
</dbReference>
<dbReference type="PRO" id="PR:Q04671"/>
<dbReference type="Proteomes" id="UP000005640">
    <property type="component" value="Chromosome 15"/>
</dbReference>
<dbReference type="RNAct" id="Q04671">
    <property type="molecule type" value="protein"/>
</dbReference>
<dbReference type="Bgee" id="ENSG00000104044">
    <property type="expression patterns" value="Expressed in pigmented layer of retina and 148 other cell types or tissues"/>
</dbReference>
<dbReference type="ExpressionAtlas" id="Q04671">
    <property type="expression patterns" value="baseline and differential"/>
</dbReference>
<dbReference type="GO" id="GO:0005789">
    <property type="term" value="C:endoplasmic reticulum membrane"/>
    <property type="evidence" value="ECO:0000314"/>
    <property type="project" value="UniProtKB"/>
</dbReference>
<dbReference type="GO" id="GO:0010008">
    <property type="term" value="C:endosome membrane"/>
    <property type="evidence" value="ECO:0000314"/>
    <property type="project" value="UniProtKB"/>
</dbReference>
<dbReference type="GO" id="GO:0005765">
    <property type="term" value="C:lysosomal membrane"/>
    <property type="evidence" value="ECO:0000314"/>
    <property type="project" value="UniProtKB"/>
</dbReference>
<dbReference type="GO" id="GO:0033162">
    <property type="term" value="C:melanosome membrane"/>
    <property type="evidence" value="ECO:0000314"/>
    <property type="project" value="UniProtKB"/>
</dbReference>
<dbReference type="GO" id="GO:0005254">
    <property type="term" value="F:chloride channel activity"/>
    <property type="evidence" value="ECO:0000314"/>
    <property type="project" value="UniProtKB"/>
</dbReference>
<dbReference type="GO" id="GO:0008283">
    <property type="term" value="P:cell population proliferation"/>
    <property type="evidence" value="ECO:0007669"/>
    <property type="project" value="Ensembl"/>
</dbReference>
<dbReference type="GO" id="GO:0035752">
    <property type="term" value="P:lysosomal lumen pH elevation"/>
    <property type="evidence" value="ECO:0000314"/>
    <property type="project" value="UniProtKB"/>
</dbReference>
<dbReference type="GO" id="GO:0042438">
    <property type="term" value="P:melanin biosynthetic process"/>
    <property type="evidence" value="ECO:0000318"/>
    <property type="project" value="GO_Central"/>
</dbReference>
<dbReference type="GO" id="GO:0006583">
    <property type="term" value="P:melanin biosynthetic process from tyrosine"/>
    <property type="evidence" value="ECO:0000314"/>
    <property type="project" value="UniProtKB"/>
</dbReference>
<dbReference type="GO" id="GO:0030318">
    <property type="term" value="P:melanocyte differentiation"/>
    <property type="evidence" value="ECO:0000318"/>
    <property type="project" value="GO_Central"/>
</dbReference>
<dbReference type="GO" id="GO:0007286">
    <property type="term" value="P:spermatid development"/>
    <property type="evidence" value="ECO:0007669"/>
    <property type="project" value="Ensembl"/>
</dbReference>
<dbReference type="CDD" id="cd01116">
    <property type="entry name" value="P_permease"/>
    <property type="match status" value="1"/>
</dbReference>
<dbReference type="InterPro" id="IPR004680">
    <property type="entry name" value="Cit_transptr-like_dom"/>
</dbReference>
<dbReference type="InterPro" id="IPR051475">
    <property type="entry name" value="Diverse_Ion_Transporter"/>
</dbReference>
<dbReference type="PANTHER" id="PTHR43568">
    <property type="entry name" value="P PROTEIN"/>
    <property type="match status" value="1"/>
</dbReference>
<dbReference type="PANTHER" id="PTHR43568:SF1">
    <property type="entry name" value="P PROTEIN"/>
    <property type="match status" value="1"/>
</dbReference>
<dbReference type="Pfam" id="PF03600">
    <property type="entry name" value="CitMHS"/>
    <property type="match status" value="1"/>
</dbReference>
<feature type="chain" id="PRO_0000172509" description="P protein">
    <location>
        <begin position="1"/>
        <end position="838"/>
    </location>
</feature>
<feature type="topological domain" description="Cytoplasmic" evidence="2">
    <location>
        <begin position="1"/>
        <end position="179"/>
    </location>
</feature>
<feature type="transmembrane region" description="Helical" evidence="2">
    <location>
        <begin position="180"/>
        <end position="197"/>
    </location>
</feature>
<feature type="topological domain" description="Extracellular" evidence="2">
    <location>
        <begin position="198"/>
        <end position="330"/>
    </location>
</feature>
<feature type="transmembrane region" description="Helical" evidence="2">
    <location>
        <begin position="331"/>
        <end position="347"/>
    </location>
</feature>
<feature type="topological domain" description="Cytoplasmic" evidence="2">
    <location>
        <begin position="348"/>
        <end position="353"/>
    </location>
</feature>
<feature type="transmembrane region" description="Helical" evidence="2">
    <location>
        <begin position="354"/>
        <end position="370"/>
    </location>
</feature>
<feature type="topological domain" description="Extracellular" evidence="2">
    <location>
        <begin position="371"/>
        <end position="384"/>
    </location>
</feature>
<feature type="transmembrane region" description="Helical" evidence="2">
    <location>
        <begin position="385"/>
        <end position="401"/>
    </location>
</feature>
<feature type="topological domain" description="Cytoplasmic" evidence="2">
    <location>
        <begin position="402"/>
        <end position="423"/>
    </location>
</feature>
<feature type="transmembrane region" description="Helical" evidence="2">
    <location>
        <begin position="424"/>
        <end position="440"/>
    </location>
</feature>
<feature type="topological domain" description="Extracellular" evidence="2">
    <location>
        <begin position="441"/>
        <end position="513"/>
    </location>
</feature>
<feature type="transmembrane region" description="Helical" evidence="2">
    <location>
        <begin position="514"/>
        <end position="530"/>
    </location>
</feature>
<feature type="topological domain" description="Cytoplasmic" evidence="2">
    <location>
        <begin position="531"/>
        <end position="620"/>
    </location>
</feature>
<feature type="transmembrane region" description="Helical" evidence="2">
    <location>
        <begin position="621"/>
        <end position="637"/>
    </location>
</feature>
<feature type="topological domain" description="Extracellular" evidence="2">
    <location>
        <begin position="638"/>
        <end position="647"/>
    </location>
</feature>
<feature type="transmembrane region" description="Helical" evidence="2">
    <location>
        <begin position="648"/>
        <end position="664"/>
    </location>
</feature>
<feature type="topological domain" description="Cytoplasmic" evidence="2">
    <location>
        <begin position="665"/>
        <end position="679"/>
    </location>
</feature>
<feature type="transmembrane region" description="Helical" evidence="2">
    <location>
        <begin position="680"/>
        <end position="696"/>
    </location>
</feature>
<feature type="topological domain" description="Extracellular" evidence="2">
    <location>
        <begin position="697"/>
        <end position="720"/>
    </location>
</feature>
<feature type="transmembrane region" description="Helical" evidence="2">
    <location>
        <begin position="721"/>
        <end position="737"/>
    </location>
</feature>
<feature type="topological domain" description="Cytoplasmic" evidence="2">
    <location>
        <begin position="738"/>
        <end position="760"/>
    </location>
</feature>
<feature type="transmembrane region" description="Helical" evidence="2">
    <location>
        <begin position="761"/>
        <end position="777"/>
    </location>
</feature>
<feature type="topological domain" description="Extracellular" evidence="2">
    <location>
        <begin position="778"/>
        <end position="817"/>
    </location>
</feature>
<feature type="transmembrane region" description="Helical" evidence="2">
    <location>
        <begin position="818"/>
        <end position="834"/>
    </location>
</feature>
<feature type="topological domain" description="Cytoplasmic" evidence="2">
    <location>
        <begin position="835"/>
        <end position="838"/>
    </location>
</feature>
<feature type="region of interest" description="Disordered" evidence="3">
    <location>
        <begin position="38"/>
        <end position="60"/>
    </location>
</feature>
<feature type="region of interest" description="Disordered" evidence="3">
    <location>
        <begin position="74"/>
        <end position="94"/>
    </location>
</feature>
<feature type="compositionally biased region" description="Polar residues" evidence="3">
    <location>
        <begin position="78"/>
        <end position="87"/>
    </location>
</feature>
<feature type="glycosylation site" description="N-linked (GlcNAc...) asparagine" evidence="2">
    <location>
        <position position="214"/>
    </location>
</feature>
<feature type="glycosylation site" description="N-linked (GlcNAc...) asparagine" evidence="2">
    <location>
        <position position="218"/>
    </location>
</feature>
<feature type="glycosylation site" description="N-linked (GlcNAc...) asparagine" evidence="2">
    <location>
        <position position="273"/>
    </location>
</feature>
<feature type="glycosylation site" description="N-linked (GlcNAc...) asparagine" evidence="2">
    <location>
        <position position="442"/>
    </location>
</feature>
<feature type="glycosylation site" description="N-linked (GlcNAc...) asparagine" evidence="2">
    <location>
        <position position="781"/>
    </location>
</feature>
<feature type="splice variant" id="VSP_012284" description="In isoform 2." evidence="31">
    <location>
        <begin position="349"/>
        <end position="372"/>
    </location>
</feature>
<feature type="splice variant" id="VSP_012285" description="In isoform 3." evidence="32">
    <original>WIAILGAIWLLILADIH</original>
    <variation>GLGLVQAGRYYLSTPES</variation>
    <location>
        <begin position="652"/>
        <end position="668"/>
    </location>
</feature>
<feature type="splice variant" id="VSP_012286" description="In isoform 3." evidence="32">
    <location>
        <begin position="669"/>
        <end position="838"/>
    </location>
</feature>
<feature type="sequence variant" id="VAR_020622" description="In OCA2; dbSNP:rs554862186." evidence="10">
    <original>R</original>
    <variation>W</variation>
    <location>
        <position position="10"/>
    </location>
</feature>
<feature type="sequence variant" id="VAR_006117" description="In OCA2; dbSNP:rs61738394." evidence="30">
    <original>G</original>
    <variation>R</variation>
    <location>
        <position position="27"/>
    </location>
</feature>
<feature type="sequence variant" id="VAR_006118" description="In OCA2; dbSNP:rs772243109." evidence="6">
    <original>S</original>
    <variation>R</variation>
    <location>
        <position position="86"/>
    </location>
</feature>
<feature type="sequence variant" id="VAR_006119" description="In OCA2; dbSNP:rs562649990." evidence="6">
    <original>C</original>
    <variation>F</variation>
    <location>
        <position position="112"/>
    </location>
</feature>
<feature type="sequence variant" id="VAR_020623" description="In OCA2; dbSNP:rs183487020." evidence="10">
    <original>P</original>
    <variation>L</variation>
    <location>
        <position position="198"/>
    </location>
</feature>
<feature type="sequence variant" id="VAR_006120" description="In OCA2; severe.">
    <location>
        <begin position="206"/>
        <end position="211"/>
    </location>
</feature>
<feature type="sequence variant" id="VAR_020624" description="In OCA2; dbSNP:rs190612616." evidence="10">
    <original>P</original>
    <variation>L</variation>
    <location>
        <position position="211"/>
    </location>
</feature>
<feature type="sequence variant" id="VAR_022019" description="In dbSNP:rs2305253.">
    <original>P</original>
    <variation>R</variation>
    <location>
        <position position="241"/>
    </location>
</feature>
<feature type="sequence variant" id="VAR_006121" description="In dbSNP:rs1050968." evidence="6 29">
    <original>A</original>
    <variation>D</variation>
    <location>
        <position position="257"/>
    </location>
</feature>
<feature type="sequence variant" id="VAR_032094" description="In dbSNP:rs33929465.">
    <original>R</original>
    <variation>W</variation>
    <location>
        <position position="266"/>
    </location>
</feature>
<feature type="sequence variant" id="VAR_006122" description="In OCA2; dbSNP:rs797044784.">
    <original>NW</original>
    <variation>KV</variation>
    <location>
        <begin position="273"/>
        <end position="274"/>
    </location>
</feature>
<feature type="sequence variant" id="VAR_020625" description="In OCA2; dbSNP:rs769408559." evidence="7 12">
    <original>R</original>
    <variation>G</variation>
    <location>
        <position position="290"/>
    </location>
</feature>
<feature type="sequence variant" id="VAR_006123" description="Affects eye pigmentation and is correlated with non-blue eye color; dbSNP:rs1800401." evidence="7 9 14 26">
    <original>R</original>
    <variation>W</variation>
    <location>
        <position position="305"/>
    </location>
</feature>
<feature type="sequence variant" id="VAR_020626" description="In OCA2; dbSNP:rs121918168." evidence="5">
    <original>A</original>
    <variation>V</variation>
    <location>
        <position position="334"/>
    </location>
</feature>
<feature type="sequence variant" id="VAR_032095" description="In dbSNP:rs34010619.">
    <original>A</original>
    <variation>V</variation>
    <location>
        <position position="336"/>
    </location>
</feature>
<feature type="sequence variant" id="VAR_020627" description="In unclassified OCA; dbSNP:rs533478642." evidence="5">
    <original>V</original>
    <variation>M</variation>
    <location>
        <position position="350"/>
    </location>
</feature>
<feature type="sequence variant" id="VAR_006124" description="In OCA2; dbSNP:rs61745150." evidence="6">
    <original>A</original>
    <variation>V</variation>
    <location>
        <position position="368"/>
    </location>
</feature>
<feature type="sequence variant" id="VAR_020628" description="In unclassified OCA; dbSNP:rs34731820." evidence="5">
    <original>I</original>
    <variation>T</variation>
    <location>
        <position position="370"/>
    </location>
</feature>
<feature type="sequence variant" id="VAR_006125" description="In OCA2; severe; dbSNP:rs137956605.">
    <original>F</original>
    <variation>I</variation>
    <location>
        <position position="385"/>
    </location>
</feature>
<feature type="sequence variant" id="VAR_020629" description="In dbSNP:rs150335311." evidence="10">
    <original>T</original>
    <variation>M</variation>
    <location>
        <position position="387"/>
    </location>
</feature>
<feature type="sequence variant" id="VAR_020630" description="In OCA2; dbSNP:rs121918171." evidence="10">
    <original>M</original>
    <variation>I</variation>
    <location>
        <position position="394"/>
    </location>
</feature>
<feature type="sequence variant" id="VAR_006126" description="In OCA2; severe; dbSNP:rs757286784.">
    <original>M</original>
    <variation>L</variation>
    <location>
        <position position="395"/>
    </location>
</feature>
<feature type="sequence variant" id="VAR_006127" description="In OCA2; dbSNP:rs144812594." evidence="23">
    <original>T</original>
    <variation>M</variation>
    <location>
        <position position="404"/>
    </location>
</feature>
<feature type="sequence variant" id="VAR_006128" description="Affects eye pigmentation and is correlated with green/hazel eye color; dbSNP:rs1800407." evidence="7 9 14 21 26">
    <original>R</original>
    <variation>Q</variation>
    <location>
        <position position="419"/>
    </location>
</feature>
<feature type="sequence variant" id="VAR_006129" description="In OCA2; dbSNP:rs143218168." evidence="23">
    <original>R</original>
    <variation>W</variation>
    <location>
        <position position="419"/>
    </location>
</feature>
<feature type="sequence variant" id="VAR_006130" description="In OCA2; mild; dbSNP:rs752510351.">
    <location>
        <position position="425"/>
    </location>
</feature>
<feature type="sequence variant" id="VAR_007939" description="In dbSNP:rs1800408." evidence="26">
    <original>L</original>
    <variation>F</variation>
    <location>
        <position position="440"/>
    </location>
</feature>
<feature type="sequence variant" id="VAR_006131">
    <original>L</original>
    <variation>H</variation>
    <location>
        <position position="440"/>
    </location>
</feature>
<feature type="sequence variant" id="VAR_006132" description="In OCA2; reduced flow of chloride ions; no effect on subcellular location; slightly increased luminal pH; dbSNP:rs121918166." evidence="7 12 17 24">
    <original>V</original>
    <variation>I</variation>
    <location>
        <position position="443"/>
    </location>
</feature>
<feature type="sequence variant" id="VAR_006133" description="In OCA2; mild; AROA form; dbSNP:rs140566426." evidence="30">
    <original>M</original>
    <variation>V</variation>
    <location>
        <position position="446"/>
    </location>
</feature>
<feature type="sequence variant" id="VAR_006134" description="In OCA2." evidence="30">
    <original>I</original>
    <variation>S</variation>
    <location>
        <position position="473"/>
    </location>
</feature>
<feature type="sequence variant" id="VAR_043700" description="In OCA2." evidence="17">
    <original>N</original>
    <variation>D</variation>
    <location>
        <position position="476"/>
    </location>
</feature>
<feature type="sequence variant" id="VAR_007940" description="In OCA2; dbSNP:rs74653330." evidence="10 11">
    <original>A</original>
    <variation>T</variation>
    <location>
        <position position="481"/>
    </location>
</feature>
<feature type="sequence variant" id="VAR_006135" description="In OCA2; mild/severe; dbSNP:rs121918170." evidence="12">
    <original>N</original>
    <variation>D</variation>
    <location>
        <position position="489"/>
    </location>
</feature>
<feature type="sequence variant" id="VAR_032096" description="In dbSNP:rs41446944.">
    <original>V</original>
    <variation>A</variation>
    <location>
        <position position="519"/>
    </location>
</feature>
<feature type="sequence variant" id="VAR_006136" description="In OCA2." evidence="4">
    <original>H</original>
    <variation>Q</variation>
    <location>
        <position position="549"/>
    </location>
</feature>
<feature type="sequence variant" id="VAR_032097" description="In dbSNP:rs35110389.">
    <original>R</original>
    <variation>H</variation>
    <location>
        <position position="560"/>
    </location>
</feature>
<feature type="sequence variant" id="VAR_006137" description="In OCA2; dbSNP:rs1800413." evidence="6">
    <original>T</original>
    <variation>I</variation>
    <location>
        <position position="592"/>
    </location>
</feature>
<feature type="sequence variant" id="VAR_020631" description="In OCA2; no effect on flow of chloride ions; no effect on subcellular location; no effect on luminal pH." evidence="7 24">
    <original>K</original>
    <variation>E</variation>
    <location>
        <position position="614"/>
    </location>
</feature>
<feature type="sequence variant" id="VAR_006138" description="In OCA2." evidence="27">
    <original>K</original>
    <variation>N</variation>
    <location>
        <position position="614"/>
    </location>
</feature>
<feature type="sequence variant" id="VAR_006139" description="In dbSNP:rs1800414." evidence="10 26">
    <original>H</original>
    <variation>R</variation>
    <location>
        <position position="615"/>
    </location>
</feature>
<feature type="sequence variant" id="VAR_020632" description="In OCA2; dbSNP:rs763016773." evidence="7">
    <original>I</original>
    <variation>L</variation>
    <location>
        <position position="617"/>
    </location>
</feature>
<feature type="sequence variant" id="VAR_072600" description="In OCA2; dbSNP:rs1372200062." evidence="23">
    <original>V</original>
    <variation>I</variation>
    <location>
        <position position="633"/>
    </location>
</feature>
<feature type="sequence variant" id="VAR_006140" description="In OCA2; dbSNP:rs886043514." evidence="30">
    <original>W</original>
    <variation>R</variation>
    <location>
        <position position="652"/>
    </location>
</feature>
<feature type="sequence variant" id="VAR_020633" description="In unclassified OCA; dbSNP:rs2039035706." evidence="5">
    <original>E</original>
    <variation>K</variation>
    <location>
        <position position="678"/>
    </location>
</feature>
<feature type="sequence variant" id="VAR_020634" description="In OCA2; dbSNP:rs121918169." evidence="7 12 23">
    <original>W</original>
    <variation>C</variation>
    <location>
        <position position="679"/>
    </location>
</feature>
<feature type="sequence variant" id="VAR_006141" description="In OCA2; severe; dbSNP:rs751822606." evidence="28">
    <original>W</original>
    <variation>R</variation>
    <location>
        <position position="679"/>
    </location>
</feature>
<feature type="sequence variant" id="VAR_072601" description="In OCA2; dbSNP:rs772754008." evidence="23">
    <original>F</original>
    <variation>C</variation>
    <location>
        <position position="684"/>
    </location>
</feature>
<feature type="sequence variant" id="VAR_020635" description="In unclassified OCA." evidence="5">
    <original>L</original>
    <variation>F</variation>
    <location>
        <position position="688"/>
    </location>
</feature>
<feature type="sequence variant" id="VAR_020636" description="In OCA2; dbSNP:rs141545475." evidence="7">
    <original>R</original>
    <variation>C</variation>
    <location>
        <position position="720"/>
    </location>
</feature>
<feature type="sequence variant" id="VAR_006142" description="In dbSNP:rs1800417." evidence="26">
    <original>I</original>
    <variation>T</variation>
    <location>
        <position position="722"/>
    </location>
</feature>
<feature type="sequence variant" id="VAR_006143" description="In OCA2." evidence="6">
    <original>A</original>
    <variation>P</variation>
    <location>
        <position position="724"/>
    </location>
</feature>
<feature type="sequence variant" id="VAR_006144" description="In OCA2; dbSNP:rs780296175." evidence="30">
    <original>S</original>
    <variation>L</variation>
    <location>
        <position position="736"/>
    </location>
</feature>
<feature type="sequence variant" id="VAR_006145" description="In OCA2 and unclassified OCA; dbSNP:rs121918167." evidence="5 12">
    <original>P</original>
    <variation>L</variation>
    <location>
        <position position="743"/>
    </location>
</feature>
<feature type="sequence variant" id="VAR_036468" description="In a breast cancer sample; somatic mutation; dbSNP:rs1184589806." evidence="15">
    <original>A</original>
    <variation>T</variation>
    <location>
        <position position="773"/>
    </location>
</feature>
<feature type="sequence variant" id="VAR_043701" description="In OCA2; dbSNP:rs774822330." evidence="17">
    <original>G</original>
    <variation>R</variation>
    <location>
        <position position="775"/>
    </location>
</feature>
<feature type="sequence variant" id="VAR_006146" description="In OCA2; dbSNP:rs200457227." evidence="6">
    <original>A</original>
    <variation>V</variation>
    <location>
        <position position="787"/>
    </location>
</feature>
<feature type="sequence variant" id="VAR_020637" description="In OCA2; dbSNP:rs2035479169." evidence="7">
    <original>G</original>
    <variation>R</variation>
    <location>
        <position position="795"/>
    </location>
</feature>
<feature type="sequence variant" id="VAR_020638" description="In OCA2." evidence="11">
    <original>Q</original>
    <variation>H</variation>
    <location>
        <position position="799"/>
    </location>
</feature>
<feature type="sequence variant" id="VAR_043702" description="In OCA2; dbSNP:rs1255943449." evidence="17">
    <original>Y</original>
    <variation>H</variation>
    <location>
        <position position="827"/>
    </location>
</feature>
<feature type="sequence variant" id="VAR_021682" description="In OCA2; dbSNP:rs751440917." evidence="7">
    <location>
        <position position="833"/>
    </location>
</feature>
<proteinExistence type="evidence at protein level"/>
<name>P_HUMAN</name>
<protein>
    <recommendedName>
        <fullName>P protein</fullName>
    </recommendedName>
    <alternativeName>
        <fullName>Melanocyte-specific transporter protein</fullName>
    </alternativeName>
    <alternativeName>
        <fullName>Pink-eyed dilution protein homolog</fullName>
    </alternativeName>
</protein>
<accession>Q04671</accession>
<accession>Q15211</accession>
<accession>Q15212</accession>
<accession>Q96EN1</accession>
<accession>Q9UMI5</accession>
<reference key="1">
    <citation type="journal article" date="1993" name="Nature">
        <title>A gene for the mouse pink-eyed dilution locus and for human type II oculocutaneous albinism.</title>
        <authorList>
            <person name="Rinchik E.M."/>
            <person name="Bultman S.J."/>
            <person name="Horsthemke B."/>
            <person name="Lee S.-T."/>
            <person name="Strunk K.M."/>
            <person name="Spritz R.A."/>
            <person name="Avidano K.A."/>
            <person name="Jong M.T.C."/>
            <person name="Nicholls R.D."/>
        </authorList>
    </citation>
    <scope>NUCLEOTIDE SEQUENCE [MRNA] (ISOFORMS 1 AND 3)</scope>
    <scope>VARIANT ASP-257</scope>
</reference>
<reference key="2">
    <citation type="journal article" date="1995" name="Genomics">
        <title>Organization and sequence of the human P gene and identification of a new family of transport proteins.</title>
        <authorList>
            <person name="Lee S.-T."/>
            <person name="Nicholls R.D."/>
            <person name="Jong M.T.C."/>
            <person name="Fukai K."/>
            <person name="Spritz R.A."/>
        </authorList>
    </citation>
    <scope>NUCLEOTIDE SEQUENCE [GENOMIC DNA] (ISOFORMS 1 AND 3)</scope>
    <scope>FUNCTION</scope>
    <scope>SUBCELLULAR LOCATION</scope>
    <scope>VARIANTS TRP-305; GLN-419; PHE-440; ARG-615 AND THR-722</scope>
</reference>
<reference key="3">
    <citation type="journal article" date="2004" name="Genome Res.">
        <title>The status, quality, and expansion of the NIH full-length cDNA project: the Mammalian Gene Collection (MGC).</title>
        <authorList>
            <consortium name="The MGC Project Team"/>
        </authorList>
    </citation>
    <scope>NUCLEOTIDE SEQUENCE [LARGE SCALE MRNA] (ISOFORM 2)</scope>
    <source>
        <tissue>Skin</tissue>
    </source>
</reference>
<reference key="4">
    <citation type="journal article" date="1992" name="Science">
        <title>The mouse pink-eyed dilution gene: association with human Prader-Willi and Angelman syndromes.</title>
        <authorList>
            <person name="Gardner J.M."/>
            <person name="Nakatsu Y."/>
            <person name="Gondo Y."/>
            <person name="Lee S."/>
            <person name="Lyon M.F."/>
            <person name="King R.A."/>
            <person name="Brilliant M.H."/>
        </authorList>
    </citation>
    <scope>NUCLEOTIDE SEQUENCE [MRNA] OF 288-419</scope>
    <scope>DISEASE</scope>
    <source>
        <tissue>Skin</tissue>
    </source>
</reference>
<reference key="5">
    <citation type="journal article" date="2001" name="Pigment Cell Res.">
        <title>The mouse p (pink-eyed dilution) and human P genes, oculocutaneous albinism type 2 (OCA2), and melanosomal pH.</title>
        <authorList>
            <person name="Brilliant M.H."/>
        </authorList>
    </citation>
    <scope>FUNCTION</scope>
</reference>
<reference key="6">
    <citation type="journal article" date="2001" name="Pigment Cell Res.">
        <title>Inverse correlation between pink-eyed dilution protein expression and induction of melanogenesis by bafilomycin A1.</title>
        <authorList>
            <person name="Manga P."/>
            <person name="Orlow S.J."/>
        </authorList>
    </citation>
    <scope>POSSIBLE INVOLVEMENT IN SKIN COLOR VARIATION</scope>
</reference>
<reference key="7">
    <citation type="journal article" date="2004" name="Trends Genet.">
        <title>Eye colour: portals into pigmentation genes and ancestry.</title>
        <authorList>
            <person name="Sturm R.A."/>
            <person name="Frudakis T.N."/>
        </authorList>
    </citation>
    <scope>FUNCTION</scope>
</reference>
<reference key="8">
    <citation type="journal article" date="2012" name="Genome Res.">
        <title>HERC2 rs12913832 modulates human pigmentation by attenuating chromatin-loop formation between a long-range enhancer and the OCA2 promoter.</title>
        <authorList>
            <person name="Visser M."/>
            <person name="Kayser M."/>
            <person name="Palstra R.J."/>
        </authorList>
    </citation>
    <scope>FUNCTION</scope>
    <scope>INDUCTION</scope>
</reference>
<reference key="9">
    <citation type="journal article" date="2020" name="Mol. Biol. Cell">
        <title>SLC45A2 protein stability and regulation of melanosome pH determine melanocyte pigmentation.</title>
        <authorList>
            <person name="Le L."/>
            <person name="Escobar I.E."/>
            <person name="Ho T."/>
            <person name="Lefkovith A.J."/>
            <person name="Latteri E."/>
            <person name="Haltaufderhyde K.D."/>
            <person name="Dennis M.K."/>
            <person name="Plowright L."/>
            <person name="Sviderskaya E.V."/>
            <person name="Bennett D.C."/>
            <person name="Oancea E."/>
            <person name="Marks M.S."/>
        </authorList>
    </citation>
    <scope>FUNCTION</scope>
    <scope>DEVELOPMENTAL STAGE</scope>
    <scope>TISSUE SPECIFICITY</scope>
</reference>
<reference key="10">
    <citation type="journal article" date="1994" name="Hum. Mol. Genet.">
        <title>Diverse mutations of the P gene among African-Americans with type II (tyrosinase-positive) oculocutaneous albinism (OCA2).</title>
        <authorList>
            <person name="Lee S.-T."/>
            <person name="Nicholls R.D."/>
            <person name="Schnur R.E."/>
            <person name="Guida L.C."/>
            <person name="Lu-Kuo J."/>
            <person name="Spinner N.B."/>
            <person name="Zackai E.H."/>
            <person name="Spritz R.A."/>
        </authorList>
    </citation>
    <scope>VARIANTS OCA2</scope>
    <scope>VARIANT OCA2 ARG-679</scope>
</reference>
<reference key="11">
    <citation type="journal article" date="1995" name="Am. J. Hum. Genet.">
        <title>Frequent intragenic deletion of the P gene in Tanzanian patients with type II oculocutaneous albinism (OCA2).</title>
        <authorList>
            <person name="Spritz R.A."/>
            <person name="Fukai K."/>
            <person name="Holmes S.A."/>
            <person name="Luande J."/>
        </authorList>
    </citation>
    <scope>VARIANT OCA2 ASN-614</scope>
</reference>
<reference key="12">
    <citation type="journal article" date="1997" name="Hum. Mutat.">
        <title>Novel mutations of the P gene in type II oculocutaneous albinism (OCA2).</title>
        <authorList>
            <person name="Spritz R.A."/>
            <person name="Lee S.-T."/>
            <person name="Fukai K."/>
            <person name="Brondum-Nielsen K."/>
            <person name="Chitayat D."/>
            <person name="Lipson M.H."/>
            <person name="Musarella M.A."/>
            <person name="Rosenmann A."/>
            <person name="Weleber R.G."/>
        </authorList>
    </citation>
    <scope>VARIANTS OCA2</scope>
    <scope>VARIANTS OCA2 ARG-27; VAL-446; SER-473; ARG-652 AND LEU-736</scope>
</reference>
<reference key="13">
    <citation type="journal article" date="1998" name="Hum. Mutat.">
        <title>Mutations of the human P gene associated with type II oculocutaneous albinism (OCA2).</title>
        <authorList>
            <person name="Oetting W.S."/>
            <person name="Gardner J.M."/>
            <person name="Fryer J.P."/>
            <person name="Ching A."/>
            <person name="Durham-Pierre D."/>
            <person name="King R.A."/>
            <person name="Brilliant M.H."/>
        </authorList>
    </citation>
    <scope>VARIANTS OCA2 ARG-86; PHE-112; VAL-368; ILE-592; PRO-724 AND VAL-787</scope>
    <scope>VARIANT ASP-257</scope>
</reference>
<reference key="14">
    <citation type="journal article" date="1999" name="Hum. Genet.">
        <title>Novel and recurrent mutations in the tyrosinase gene and the P gene in the German albino population.</title>
        <authorList>
            <person name="Passmore L.A."/>
            <person name="Kaesmann-Kellner B."/>
            <person name="Weber B.H.F."/>
        </authorList>
    </citation>
    <scope>VARIANTS OCA2 GLY-290; ILE-443; GLU-614; LEU-617; CYS-679; CYS-720; ARG-795 AND VAL-833 DEL</scope>
    <scope>VARIANTS TRP-305 AND GLN-419</scope>
</reference>
<reference key="15">
    <citation type="journal article" date="1999" name="Hum. Mutat.">
        <title>Molecular basis of albinism: mutations and polymorphisms of pigmentation genes associated with albinism.</title>
        <authorList>
            <person name="Oetting W.S."/>
            <person name="King R.A."/>
        </authorList>
    </citation>
    <scope>VARIANT OCA2 GLN-549</scope>
</reference>
<reference key="16">
    <citation type="journal article" date="2000" name="Hum. Mutat.">
        <title>Identification of P gene mutations in individuals with oculocutaneous albinism in sub-Saharan Africa.</title>
        <authorList>
            <person name="Kerr R."/>
            <person name="Stevens G."/>
            <person name="Manga P."/>
            <person name="Salm S."/>
            <person name="John P."/>
            <person name="Haw T."/>
            <person name="Ramsay M."/>
        </authorList>
    </citation>
    <scope>VARIANT OCA2 VAL-334</scope>
    <scope>VARIANTS UNCLASSIFIED OCA MET-350; THR-370; LYS-678; PHE-688 AND LEU-743</scope>
</reference>
<reference key="17">
    <citation type="journal article" date="2002" name="Cancer Epidemiol. Biomarkers Prev.">
        <title>P gene as an inherited biomarker of human eye color.</title>
        <authorList>
            <person name="Rebbeck T.R."/>
            <person name="Kanetsky P.A."/>
            <person name="Walker A.H."/>
            <person name="Holmes R."/>
            <person name="Halpern A.C."/>
            <person name="Schuchter L.M."/>
            <person name="Elder D.E."/>
            <person name="Guerry D."/>
        </authorList>
    </citation>
    <scope>VARIANTS TRP-305 AND GLN-419</scope>
    <scope>INVOLVEMENT IN DETERMINATION OF EYE COLOR</scope>
</reference>
<reference key="18">
    <citation type="journal article" date="2003" name="Am. J. Hum. Genet.">
        <title>MC1R mutations modify the classic phenotype of oculocutaneous albinism type 2 (OCA2).</title>
        <authorList>
            <person name="King R.A."/>
            <person name="Willaert R.K."/>
            <person name="Schmidt R.M."/>
            <person name="Pietsch J."/>
            <person name="Savage S."/>
            <person name="Brott M.J."/>
            <person name="Fryer J.P."/>
            <person name="Summers C.G."/>
            <person name="Oetting W.S."/>
        </authorList>
    </citation>
    <scope>VARIANTS OCA2 GLY-290; ILE-443; ASP-489; CYS-679 AND LEU-743</scope>
</reference>
<reference key="19">
    <citation type="journal article" date="2003" name="J. Dermatol. Sci.">
        <title>A novel P gene missense mutation in a Japanese patient with oculocutaneous albinism type II (OCA2).</title>
        <authorList>
            <person name="Kato A."/>
            <person name="Fukai K."/>
            <person name="Oiso N."/>
            <person name="Hosomi N."/>
            <person name="Saitoh S."/>
            <person name="Wada T."/>
            <person name="Shimizu H."/>
            <person name="Ishii M."/>
        </authorList>
    </citation>
    <scope>VARIANTS OCA2 THR-481 AND HIS-799</scope>
</reference>
<reference key="20">
    <citation type="journal article" date="2003" name="J. Invest. Dermatol.">
        <title>Six novel P gene mutations and oculocutaneous albinism type 2 frequency in Japanese albino patients.</title>
        <authorList>
            <person name="Suzuki T."/>
            <person name="Miyamura Y."/>
            <person name="Matsunaga J."/>
            <person name="Shimizu H."/>
            <person name="Kawachi Y."/>
            <person name="Ohyama N."/>
            <person name="Ishikawa O."/>
            <person name="Ishikawa T."/>
            <person name="Terao H."/>
            <person name="Tomita Y."/>
        </authorList>
    </citation>
    <scope>VARIANTS OCA2 TRP-10; LEU-198; LEU-211; ILE-394 AND THR-481</scope>
    <scope>VARIANTS MET-387 AND ARG-615</scope>
</reference>
<reference key="21">
    <citation type="journal article" date="2005" name="Eur. J. Hum. Genet.">
        <title>Allele variations in the OCA2 gene (pink-eyed-dilution locus) are associated with genetic susceptibility to melanoma.</title>
        <authorList>
            <consortium name="Melan-Cohort"/>
            <person name="Jannot A.-S."/>
            <person name="Meziani R."/>
            <person name="Bertrand G."/>
            <person name="Gerard B."/>
            <person name="Descamps V."/>
            <person name="Archimbaud A."/>
            <person name="Picard C."/>
            <person name="Ollivaud L."/>
            <person name="Basset-Seguin N."/>
            <person name="Kerob D."/>
            <person name="Lanternier G."/>
            <person name="Lebbe C."/>
            <person name="Saiag P."/>
            <person name="Crickx B."/>
            <person name="Clerget-Darpoux F."/>
            <person name="Grandchamp B."/>
            <person name="Soufir N."/>
        </authorList>
    </citation>
    <scope>VARIANTS TRP-305 AND GLN-419</scope>
    <scope>INVOLVEMENT IN SUSCEPTIBILITY TO MELANOMA</scope>
</reference>
<reference key="22">
    <citation type="journal article" date="2007" name="Am. J. Hum. Genet.">
        <title>A three-single-nucleotide polymorphism haplotype in intron 1 of OCA2 explains most human eye-color variation.</title>
        <authorList>
            <person name="Duffy D.L."/>
            <person name="Montgomery G.W."/>
            <person name="Chen W."/>
            <person name="Zhao Z.Z."/>
            <person name="Le L."/>
            <person name="James M.R."/>
            <person name="Hayward N.K."/>
            <person name="Martin N.G."/>
            <person name="Sturm R.A."/>
        </authorList>
    </citation>
    <scope>INVOLVEMENT IN SHEP1</scope>
    <scope>POLYMORPHISM</scope>
</reference>
<reference key="23">
    <citation type="journal article" date="2006" name="Science">
        <title>The consensus coding sequences of human breast and colorectal cancers.</title>
        <authorList>
            <person name="Sjoeblom T."/>
            <person name="Jones S."/>
            <person name="Wood L.D."/>
            <person name="Parsons D.W."/>
            <person name="Lin J."/>
            <person name="Barber T.D."/>
            <person name="Mandelker D."/>
            <person name="Leary R.J."/>
            <person name="Ptak J."/>
            <person name="Silliman N."/>
            <person name="Szabo S."/>
            <person name="Buckhaults P."/>
            <person name="Farrell C."/>
            <person name="Meeh P."/>
            <person name="Markowitz S.D."/>
            <person name="Willis J."/>
            <person name="Dawson D."/>
            <person name="Willson J.K.V."/>
            <person name="Gazdar A.F."/>
            <person name="Hartigan J."/>
            <person name="Wu L."/>
            <person name="Liu C."/>
            <person name="Parmigiani G."/>
            <person name="Park B.H."/>
            <person name="Bachman K.E."/>
            <person name="Papadopoulos N."/>
            <person name="Vogelstein B."/>
            <person name="Kinzler K.W."/>
            <person name="Velculescu V.E."/>
        </authorList>
    </citation>
    <scope>VARIANT [LARGE SCALE ANALYSIS] THR-773</scope>
</reference>
<reference key="24">
    <citation type="journal article" date="2007" name="Nat. Genet.">
        <title>Genetic determinants of hair, eye and skin pigmentation in Europeans.</title>
        <authorList>
            <person name="Sulem P."/>
            <person name="Gudbjartsson D.F."/>
            <person name="Stacey S.N."/>
            <person name="Helgason A."/>
            <person name="Rafnar T."/>
            <person name="Magnusson K.P."/>
            <person name="Manolescu A."/>
            <person name="Karason A."/>
            <person name="Palsson A."/>
            <person name="Thorleifsson G."/>
            <person name="Jakobsdottir M."/>
            <person name="Steinberg S."/>
            <person name="Palsson S."/>
            <person name="Jonasson F."/>
            <person name="Sigurgeirsson B."/>
            <person name="Thorisdottir K."/>
            <person name="Ragnarsson R."/>
            <person name="Benediktsdottir K.R."/>
            <person name="Aben K.K."/>
            <person name="Kiemeney L.A."/>
            <person name="Olafsson J.H."/>
            <person name="Gulcher J."/>
            <person name="Kong A."/>
            <person name="Thorsteinsdottir U."/>
            <person name="Stefansson K."/>
        </authorList>
    </citation>
    <scope>INVOLVEMENT IN SHEP1</scope>
    <scope>POLYMORPHISM</scope>
</reference>
<reference key="25">
    <citation type="journal article" date="2007" name="Prenat. Diagn.">
        <title>Prenatal diagnosis of oculocutaneous albinism type II and novel mutations in two Chinese families.</title>
        <authorList>
            <person name="Hongyi L."/>
            <person name="Haiyun W."/>
            <person name="Hui Z."/>
            <person name="Qing W."/>
            <person name="Honglei D."/>
            <person name="Shu M."/>
            <person name="Weiying J."/>
        </authorList>
    </citation>
    <scope>VARIANTS OCA2 ILE-443; ASP-476; ARG-775 AND HIS-827</scope>
</reference>
<reference key="26">
    <citation type="journal article" date="2008" name="Am. J. Hum. Genet.">
        <title>Three genome-wide association studies and a linkage analysis identify HERC2 as a human iris color gene.</title>
        <authorList>
            <person name="Kayser M."/>
            <person name="Liu F."/>
            <person name="Janssens A.C.J.W."/>
            <person name="Rivadeneira F."/>
            <person name="Lao O."/>
            <person name="van Duijn K."/>
            <person name="Vermeulen M."/>
            <person name="Arp P."/>
            <person name="Jhamai M.M."/>
            <person name="van Ijcken W.F.J."/>
            <person name="den Dunnen J.T."/>
            <person name="Heath S."/>
            <person name="Zelenika D."/>
            <person name="Despriet D.D.G."/>
            <person name="Klaver C.C.W."/>
            <person name="Vingerling J.R."/>
            <person name="de Jong P.T.V.M."/>
            <person name="Hofman A."/>
            <person name="Aulchenko Y.S."/>
            <person name="Uitterlinden A.G."/>
            <person name="Oostra B.A."/>
            <person name="van Duijn C.M."/>
        </authorList>
    </citation>
    <scope>INVOLVEMENT IN SHEP1</scope>
    <scope>POLYMORPHISM</scope>
</reference>
<reference key="27">
    <citation type="journal article" date="2008" name="Am. J. Hum. Genet.">
        <title>A single SNP in an evolutionary conserved region within intron 86 of the HERC2 gene determines human blue-brown eye color.</title>
        <authorList>
            <person name="Sturm R.A."/>
            <person name="Duffy D.L."/>
            <person name="Zhao Z.Z."/>
            <person name="Leite F.P.M."/>
            <person name="Stark M.S."/>
            <person name="Hayward N.K."/>
            <person name="Martin N.G."/>
            <person name="Montgomery G.W."/>
        </authorList>
    </citation>
    <scope>VARIANT GLN-419</scope>
    <scope>FUNCTION</scope>
    <scope>INDUCTION</scope>
    <scope>INVOLVEMENT IN SHEP1</scope>
    <scope>INVOLVEMENT IN SUSCEPTIBILITY TO MELANOMA</scope>
    <scope>POLYMORPHISM</scope>
</reference>
<reference key="28">
    <citation type="journal article" date="2008" name="Hum. Genet.">
        <title>Blue eye color in humans may be caused by a perfectly associated founder mutation in a regulatory element located within the HERC2 gene inhibiting OCA2 expression.</title>
        <authorList>
            <person name="Eiberg H."/>
            <person name="Troelsen J."/>
            <person name="Nielsen M."/>
            <person name="Mikkelsen A."/>
            <person name="Mengel-From J."/>
            <person name="Kjaer K.W."/>
            <person name="Hansen L."/>
        </authorList>
    </citation>
    <scope>INVOLVEMENT IN SHEP1</scope>
    <scope>POLYMORPHISM</scope>
    <scope>INDUCTION</scope>
</reference>
<reference key="29">
    <citation type="journal article" date="2013" name="Hum. Mutat.">
        <title>DNA variations in oculocutaneous albinism: an updated mutation list and current outstanding issues in molecular diagnostics.</title>
        <authorList>
            <person name="Simeonov D.R."/>
            <person name="Wang X."/>
            <person name="Wang C."/>
            <person name="Sergeev Y."/>
            <person name="Dolinska M."/>
            <person name="Bower M."/>
            <person name="Fischer R."/>
            <person name="Winer D."/>
            <person name="Dubrovsky G."/>
            <person name="Balog J.Z."/>
            <person name="Huizing M."/>
            <person name="Hart R."/>
            <person name="Zein W.M."/>
            <person name="Gahl W.A."/>
            <person name="Brooks B.P."/>
            <person name="Adams D.R."/>
        </authorList>
    </citation>
    <scope>VARIANTS OCA2 MET-404; TRP-419; ILE-633; CYS-679 AND CYS-684</scope>
</reference>
<reference key="30">
    <citation type="journal article" date="2014" name="Elife">
        <title>An intracellular anion channel critical for pigmentation.</title>
        <authorList>
            <person name="Bellono N.W."/>
            <person name="Escobar I.E."/>
            <person name="Lefkovith A.J."/>
            <person name="Marks M.S."/>
            <person name="Oancea E."/>
        </authorList>
    </citation>
    <scope>FUNCTION</scope>
    <scope>CHANNEL ACTIVITY</scope>
    <scope>CHARACTERIZATION OF VARIANTS OCA2 ILE-443 AND GLU-614</scope>
    <scope>SUBCELLULAR LOCATION</scope>
</reference>
<keyword id="KW-0015">Albinism</keyword>
<keyword id="KW-0025">Alternative splicing</keyword>
<keyword id="KW-0225">Disease variant</keyword>
<keyword id="KW-0325">Glycoprotein</keyword>
<keyword id="KW-0472">Membrane</keyword>
<keyword id="KW-1267">Proteomics identification</keyword>
<keyword id="KW-1185">Reference proteome</keyword>
<keyword id="KW-0812">Transmembrane</keyword>
<keyword id="KW-1133">Transmembrane helix</keyword>
<keyword id="KW-0813">Transport</keyword>
<comment type="function">
    <text evidence="1 8 13 21 22 24 26">Contributes to a melanosome-specific anion (chloride) current that modulates melanosomal pH for optimal tyrosinase activity required for melanogenesis and the melanosome maturation (PubMed:11310796, PubMed:15262401, PubMed:22234890, PubMed:25513726). One of the components of the mammalian pigmentary system (PubMed:15262401, PubMed:18252222, PubMed:7601462). May serve as a key control point at which ethnic skin color variation is determined. Major determinant of brown and/or blue eye color (PubMed:15262401, PubMed:18252222, PubMed:7601462). Seems to regulate the post-translational processing of tyrosinase, which catalyzes the limiting reaction in melanin synthesis (By similarity).</text>
</comment>
<comment type="catalytic activity">
    <reaction evidence="34">
        <text>chloride(in) = chloride(out)</text>
        <dbReference type="Rhea" id="RHEA:29823"/>
        <dbReference type="ChEBI" id="CHEBI:17996"/>
    </reaction>
</comment>
<comment type="subcellular location">
    <subcellularLocation>
        <location evidence="24 26">Melanosome membrane</location>
        <topology evidence="26">Multi-pass membrane protein</topology>
    </subcellularLocation>
</comment>
<comment type="alternative products">
    <event type="alternative splicing"/>
    <isoform>
        <id>Q04671-1</id>
        <name>1</name>
        <sequence type="displayed"/>
    </isoform>
    <isoform>
        <id>Q04671-2</id>
        <name>2</name>
        <sequence type="described" ref="VSP_012284"/>
    </isoform>
    <isoform>
        <id>Q04671-3</id>
        <name>3</name>
        <sequence type="described" ref="VSP_012285 VSP_012286"/>
    </isoform>
</comment>
<comment type="tissue specificity">
    <text evidence="24 25">Expressed in melanocytes and retinal pigment epithelium.</text>
</comment>
<comment type="developmental stage">
    <text evidence="25">Expressed at early stages of melanosome differentiation.</text>
</comment>
<comment type="induction">
    <text evidence="19 21 22">Expression is under the control of an enhancer element that is encoded in an intron of the close-by HERC2 gene. The enhancer element containing the T-allele of the polymorphism rs12913832 mediates binding of the transcription factors HLTF, LEF1 and MITF and increases OCA2 expression. In contrast, transcription factor binding and OCA2 expression are reduced in carriers of the C-allele of polymorphism rs12913832. Thus, people homozygous for the C-allele have light-colored eyes, while people homozygous for the T-allele of polymorphism rs12913832 most often have brown eyes.</text>
</comment>
<comment type="polymorphism">
    <text evidence="16 18 19 20 21">Genetic variants in OCA2 define the skin/hair/eye pigmentation variation locus 1 (SHEP1) [MIM:227220]; also known as skin/hair/eye pigmentation type 1, blue/nonblue eyes or skin/hair/eye pigmentation type 1, blue/brown eyes or skin/hair/eye pigmentation type 1, blond/brown hair or eye color, brown/blue or eye color, blue/nonblue or eye color type 3 (EYCL3) or brown eye color type 2 (BEY2) or hair color type 3 (HCL3). Hair, eye and skin pigmentation are among the most visible examples of human phenotypic variation, with a broad normal range that is subject to substantial geographic stratification. In the case of skin, individuals tend to have lighter pigmentation with increasing distance from the equator. By contrast, the majority of variation in human eye and hair color is found among individuals of European ancestry, with most other human populations fixed for brown eyes and black hair. OCA2 polymorphisms may act as a penetrance modifier of the risk of malignant melanoma.</text>
</comment>
<comment type="disease" evidence="4 5 6 7 10 11 12 17 23 24 27 28 30">
    <disease id="DI-02085">
        <name>Albinism, oculocutaneous, 2</name>
        <acronym>OCA2</acronym>
        <description>An autosomal recessive disorder in which the biosynthesis of melanin pigment is reduced in skin, hair, and eyes. Although affected infants may appear at birth to have complete absence of melanin pigment, most patients acquire small amounts of pigment with age. Visual anomalies include decreased acuity and nystagmus. The phenotype is highly variable. The hair of affected individuals may turn darker with age, and pigmented nevi or freckles may be seen. African and African American individuals may have yellow hair and blue-gray or hazel irides. One phenotypic variant, 'brown OCA,' has been described in African and African American populations and is characterized by light brown hair and skin color and gray to tan irides.</description>
        <dbReference type="MIM" id="203200"/>
    </disease>
    <text>The disease is caused by variants affecting the gene represented in this entry.</text>
</comment>
<comment type="similarity">
    <text evidence="33">Belongs to the CitM (TC 2.A.11) transporter family.</text>
</comment>
<comment type="online information" name="Albinism database (ADB)">
    <link uri="http://www.ifpcs.org/albinism/oca2mut.html"/>
    <text>P mutations</text>
</comment>
<comment type="online information" name="Protein Spotlight">
    <link uri="https://www.proteinspotlight.org/back_issues/054"/>
    <text>Questioning colour - Issue 54 of January 2005</text>
</comment>